<keyword id="KW-0131">Cell cycle</keyword>
<keyword id="KW-0132">Cell division</keyword>
<keyword id="KW-0997">Cell inner membrane</keyword>
<keyword id="KW-1003">Cell membrane</keyword>
<keyword id="KW-0175">Coiled coil</keyword>
<keyword id="KW-0472">Membrane</keyword>
<keyword id="KW-1185">Reference proteome</keyword>
<keyword id="KW-0812">Transmembrane</keyword>
<keyword id="KW-1133">Transmembrane helix</keyword>
<sequence>MRLISLLLFVLLLAIQYPLWLGKGGWLRVWDLNRQVNEQTVHNQALKLRNAKLEGEVKDLQDGTGAIEERARYELGMVKDGEVFVQFVAPAPKVSATPPLPPPPNSVAGRGGH</sequence>
<name>FTSB_CUPMC</name>
<accession>Q1LPI4</accession>
<reference key="1">
    <citation type="journal article" date="2010" name="PLoS ONE">
        <title>The complete genome sequence of Cupriavidus metallidurans strain CH34, a master survivalist in harsh and anthropogenic environments.</title>
        <authorList>
            <person name="Janssen P.J."/>
            <person name="Van Houdt R."/>
            <person name="Moors H."/>
            <person name="Monsieurs P."/>
            <person name="Morin N."/>
            <person name="Michaux A."/>
            <person name="Benotmane M.A."/>
            <person name="Leys N."/>
            <person name="Vallaeys T."/>
            <person name="Lapidus A."/>
            <person name="Monchy S."/>
            <person name="Medigue C."/>
            <person name="Taghavi S."/>
            <person name="McCorkle S."/>
            <person name="Dunn J."/>
            <person name="van der Lelie D."/>
            <person name="Mergeay M."/>
        </authorList>
    </citation>
    <scope>NUCLEOTIDE SEQUENCE [LARGE SCALE GENOMIC DNA]</scope>
    <source>
        <strain>ATCC 43123 / DSM 2839 / NBRC 102507 / CH34</strain>
    </source>
</reference>
<feature type="chain" id="PRO_1000025718" description="Cell division protein FtsB">
    <location>
        <begin position="1"/>
        <end position="113"/>
    </location>
</feature>
<feature type="topological domain" description="Cytoplasmic" evidence="1">
    <location>
        <begin position="1"/>
        <end position="3"/>
    </location>
</feature>
<feature type="transmembrane region" description="Helical" evidence="1">
    <location>
        <begin position="4"/>
        <end position="21"/>
    </location>
</feature>
<feature type="topological domain" description="Periplasmic" evidence="1">
    <location>
        <begin position="22"/>
        <end position="113"/>
    </location>
</feature>
<feature type="region of interest" description="Disordered" evidence="2">
    <location>
        <begin position="93"/>
        <end position="113"/>
    </location>
</feature>
<feature type="coiled-coil region" evidence="1">
    <location>
        <begin position="34"/>
        <end position="64"/>
    </location>
</feature>
<organism>
    <name type="scientific">Cupriavidus metallidurans (strain ATCC 43123 / DSM 2839 / NBRC 102507 / CH34)</name>
    <name type="common">Ralstonia metallidurans</name>
    <dbReference type="NCBI Taxonomy" id="266264"/>
    <lineage>
        <taxon>Bacteria</taxon>
        <taxon>Pseudomonadati</taxon>
        <taxon>Pseudomonadota</taxon>
        <taxon>Betaproteobacteria</taxon>
        <taxon>Burkholderiales</taxon>
        <taxon>Burkholderiaceae</taxon>
        <taxon>Cupriavidus</taxon>
    </lineage>
</organism>
<proteinExistence type="inferred from homology"/>
<protein>
    <recommendedName>
        <fullName evidence="1">Cell division protein FtsB</fullName>
    </recommendedName>
</protein>
<comment type="function">
    <text evidence="1">Essential cell division protein. May link together the upstream cell division proteins, which are predominantly cytoplasmic, with the downstream cell division proteins, which are predominantly periplasmic.</text>
</comment>
<comment type="subunit">
    <text evidence="1">Part of a complex composed of FtsB, FtsL and FtsQ.</text>
</comment>
<comment type="subcellular location">
    <subcellularLocation>
        <location evidence="1">Cell inner membrane</location>
        <topology evidence="1">Single-pass type II membrane protein</topology>
    </subcellularLocation>
    <text evidence="1">Localizes to the division septum.</text>
</comment>
<comment type="similarity">
    <text evidence="1">Belongs to the FtsB family.</text>
</comment>
<dbReference type="EMBL" id="CP000352">
    <property type="protein sequence ID" value="ABF07942.1"/>
    <property type="molecule type" value="Genomic_DNA"/>
</dbReference>
<dbReference type="RefSeq" id="WP_008650101.1">
    <property type="nucleotide sequence ID" value="NC_007973.1"/>
</dbReference>
<dbReference type="SMR" id="Q1LPI4"/>
<dbReference type="STRING" id="266264.Rmet_1056"/>
<dbReference type="GeneID" id="60821917"/>
<dbReference type="KEGG" id="rme:Rmet_1056"/>
<dbReference type="eggNOG" id="COG2919">
    <property type="taxonomic scope" value="Bacteria"/>
</dbReference>
<dbReference type="HOGENOM" id="CLU_134863_5_0_4"/>
<dbReference type="Proteomes" id="UP000002429">
    <property type="component" value="Chromosome"/>
</dbReference>
<dbReference type="GO" id="GO:0032153">
    <property type="term" value="C:cell division site"/>
    <property type="evidence" value="ECO:0007669"/>
    <property type="project" value="UniProtKB-UniRule"/>
</dbReference>
<dbReference type="GO" id="GO:0030428">
    <property type="term" value="C:cell septum"/>
    <property type="evidence" value="ECO:0007669"/>
    <property type="project" value="TreeGrafter"/>
</dbReference>
<dbReference type="GO" id="GO:0005886">
    <property type="term" value="C:plasma membrane"/>
    <property type="evidence" value="ECO:0007669"/>
    <property type="project" value="UniProtKB-SubCell"/>
</dbReference>
<dbReference type="GO" id="GO:0043093">
    <property type="term" value="P:FtsZ-dependent cytokinesis"/>
    <property type="evidence" value="ECO:0007669"/>
    <property type="project" value="UniProtKB-UniRule"/>
</dbReference>
<dbReference type="HAMAP" id="MF_00599">
    <property type="entry name" value="FtsB"/>
    <property type="match status" value="1"/>
</dbReference>
<dbReference type="InterPro" id="IPR023081">
    <property type="entry name" value="Cell_div_FtsB"/>
</dbReference>
<dbReference type="InterPro" id="IPR007060">
    <property type="entry name" value="FtsL/DivIC"/>
</dbReference>
<dbReference type="NCBIfam" id="NF002058">
    <property type="entry name" value="PRK00888.1"/>
    <property type="match status" value="1"/>
</dbReference>
<dbReference type="PANTHER" id="PTHR37485">
    <property type="entry name" value="CELL DIVISION PROTEIN FTSB"/>
    <property type="match status" value="1"/>
</dbReference>
<dbReference type="PANTHER" id="PTHR37485:SF1">
    <property type="entry name" value="CELL DIVISION PROTEIN FTSB"/>
    <property type="match status" value="1"/>
</dbReference>
<dbReference type="Pfam" id="PF04977">
    <property type="entry name" value="DivIC"/>
    <property type="match status" value="1"/>
</dbReference>
<evidence type="ECO:0000255" key="1">
    <source>
        <dbReference type="HAMAP-Rule" id="MF_00599"/>
    </source>
</evidence>
<evidence type="ECO:0000256" key="2">
    <source>
        <dbReference type="SAM" id="MobiDB-lite"/>
    </source>
</evidence>
<gene>
    <name evidence="1" type="primary">ftsB</name>
    <name type="ordered locus">Rmet_1056</name>
</gene>